<proteinExistence type="evidence at protein level"/>
<gene>
    <name type="ordered locus">Rv0487</name>
    <name type="ORF">MTCY20G9.13</name>
</gene>
<protein>
    <recommendedName>
        <fullName>Uncharacterized protein Rv0487</fullName>
    </recommendedName>
</protein>
<dbReference type="EMBL" id="AL123456">
    <property type="protein sequence ID" value="CCP43221.1"/>
    <property type="molecule type" value="Genomic_DNA"/>
</dbReference>
<dbReference type="PIR" id="B70744">
    <property type="entry name" value="B70744"/>
</dbReference>
<dbReference type="RefSeq" id="NP_215001.1">
    <property type="nucleotide sequence ID" value="NC_000962.3"/>
</dbReference>
<dbReference type="RefSeq" id="WP_003402370.1">
    <property type="nucleotide sequence ID" value="NZ_NVQJ01000002.1"/>
</dbReference>
<dbReference type="SMR" id="P9WKU9"/>
<dbReference type="STRING" id="83332.Rv0487"/>
<dbReference type="PaxDb" id="83332-Rv0487"/>
<dbReference type="GeneID" id="887162"/>
<dbReference type="KEGG" id="mtu:Rv0487"/>
<dbReference type="KEGG" id="mtv:RVBD_0487"/>
<dbReference type="PATRIC" id="fig|83332.111.peg.534"/>
<dbReference type="TubercuList" id="Rv0487"/>
<dbReference type="eggNOG" id="ENOG5031R9K">
    <property type="taxonomic scope" value="Bacteria"/>
</dbReference>
<dbReference type="InParanoid" id="P9WKU9"/>
<dbReference type="OrthoDB" id="3212317at2"/>
<dbReference type="PhylomeDB" id="P9WKU9"/>
<dbReference type="Proteomes" id="UP000001584">
    <property type="component" value="Chromosome"/>
</dbReference>
<dbReference type="Gene3D" id="3.30.1460.10">
    <property type="match status" value="1"/>
</dbReference>
<dbReference type="InterPro" id="IPR019660">
    <property type="entry name" value="Put_sensory_transdc_reg_YbjN"/>
</dbReference>
<dbReference type="Pfam" id="PF10722">
    <property type="entry name" value="YbjN"/>
    <property type="match status" value="1"/>
</dbReference>
<dbReference type="SUPFAM" id="SSF69635">
    <property type="entry name" value="Type III secretory system chaperone-like"/>
    <property type="match status" value="1"/>
</dbReference>
<evidence type="ECO:0000305" key="1"/>
<feature type="chain" id="PRO_0000103689" description="Uncharacterized protein Rv0487">
    <location>
        <begin position="1"/>
        <end position="183"/>
    </location>
</feature>
<sequence>MTSSLPTVQRVIQNALEVSQLKYSQHPRPGGAPPALIVELPGERKLKINTILSVGEHSVRVEAFVCRKPDENREDVYRFLLRRNRRLYGVAYTLDNVGDIYLVGQMALSAVDADEVDRVLGQVLEVVDSDFNALLELGFRSSIQREWQWRLSRGESLQNLQAFAHLRPTTMQSAQRDEKELGG</sequence>
<organism>
    <name type="scientific">Mycobacterium tuberculosis (strain ATCC 25618 / H37Rv)</name>
    <dbReference type="NCBI Taxonomy" id="83332"/>
    <lineage>
        <taxon>Bacteria</taxon>
        <taxon>Bacillati</taxon>
        <taxon>Actinomycetota</taxon>
        <taxon>Actinomycetes</taxon>
        <taxon>Mycobacteriales</taxon>
        <taxon>Mycobacteriaceae</taxon>
        <taxon>Mycobacterium</taxon>
        <taxon>Mycobacterium tuberculosis complex</taxon>
    </lineage>
</organism>
<reference key="1">
    <citation type="journal article" date="1998" name="Nature">
        <title>Deciphering the biology of Mycobacterium tuberculosis from the complete genome sequence.</title>
        <authorList>
            <person name="Cole S.T."/>
            <person name="Brosch R."/>
            <person name="Parkhill J."/>
            <person name="Garnier T."/>
            <person name="Churcher C.M."/>
            <person name="Harris D.E."/>
            <person name="Gordon S.V."/>
            <person name="Eiglmeier K."/>
            <person name="Gas S."/>
            <person name="Barry C.E. III"/>
            <person name="Tekaia F."/>
            <person name="Badcock K."/>
            <person name="Basham D."/>
            <person name="Brown D."/>
            <person name="Chillingworth T."/>
            <person name="Connor R."/>
            <person name="Davies R.M."/>
            <person name="Devlin K."/>
            <person name="Feltwell T."/>
            <person name="Gentles S."/>
            <person name="Hamlin N."/>
            <person name="Holroyd S."/>
            <person name="Hornsby T."/>
            <person name="Jagels K."/>
            <person name="Krogh A."/>
            <person name="McLean J."/>
            <person name="Moule S."/>
            <person name="Murphy L.D."/>
            <person name="Oliver S."/>
            <person name="Osborne J."/>
            <person name="Quail M.A."/>
            <person name="Rajandream M.A."/>
            <person name="Rogers J."/>
            <person name="Rutter S."/>
            <person name="Seeger K."/>
            <person name="Skelton S."/>
            <person name="Squares S."/>
            <person name="Squares R."/>
            <person name="Sulston J.E."/>
            <person name="Taylor K."/>
            <person name="Whitehead S."/>
            <person name="Barrell B.G."/>
        </authorList>
    </citation>
    <scope>NUCLEOTIDE SEQUENCE [LARGE SCALE GENOMIC DNA]</scope>
    <source>
        <strain>ATCC 25618 / H37Rv</strain>
    </source>
</reference>
<reference key="2">
    <citation type="journal article" date="2011" name="Mol. Cell. Proteomics">
        <title>Proteogenomic analysis of Mycobacterium tuberculosis by high resolution mass spectrometry.</title>
        <authorList>
            <person name="Kelkar D.S."/>
            <person name="Kumar D."/>
            <person name="Kumar P."/>
            <person name="Balakrishnan L."/>
            <person name="Muthusamy B."/>
            <person name="Yadav A.K."/>
            <person name="Shrivastava P."/>
            <person name="Marimuthu A."/>
            <person name="Anand S."/>
            <person name="Sundaram H."/>
            <person name="Kingsbury R."/>
            <person name="Harsha H.C."/>
            <person name="Nair B."/>
            <person name="Prasad T.S."/>
            <person name="Chauhan D.S."/>
            <person name="Katoch K."/>
            <person name="Katoch V.M."/>
            <person name="Kumar P."/>
            <person name="Chaerkady R."/>
            <person name="Ramachandran S."/>
            <person name="Dash D."/>
            <person name="Pandey A."/>
        </authorList>
    </citation>
    <scope>IDENTIFICATION BY MASS SPECTROMETRY [LARGE SCALE ANALYSIS]</scope>
    <source>
        <strain>ATCC 25618 / H37Rv</strain>
    </source>
</reference>
<keyword id="KW-1185">Reference proteome</keyword>
<accession>P9WKU9</accession>
<accession>L0T3W6</accession>
<accession>P64709</accession>
<accession>Q11153</accession>
<comment type="similarity">
    <text evidence="1">To M.leprae ML2442.</text>
</comment>
<name>Y487_MYCTU</name>